<feature type="chain" id="PRO_0000317209" description="Putative ribosomal RNA methyltransferase PB17E12.10c">
    <location>
        <begin position="1"/>
        <end position="301"/>
    </location>
</feature>
<feature type="active site" description="Proton acceptor" evidence="1">
    <location>
        <position position="247"/>
    </location>
</feature>
<feature type="binding site" evidence="1">
    <location>
        <position position="87"/>
    </location>
    <ligand>
        <name>S-adenosyl-L-methionine</name>
        <dbReference type="ChEBI" id="CHEBI:59789"/>
    </ligand>
</feature>
<feature type="binding site" evidence="1">
    <location>
        <position position="89"/>
    </location>
    <ligand>
        <name>S-adenosyl-L-methionine</name>
        <dbReference type="ChEBI" id="CHEBI:59789"/>
    </ligand>
</feature>
<feature type="binding site" evidence="1">
    <location>
        <position position="107"/>
    </location>
    <ligand>
        <name>S-adenosyl-L-methionine</name>
        <dbReference type="ChEBI" id="CHEBI:59789"/>
    </ligand>
</feature>
<feature type="binding site" evidence="1">
    <location>
        <position position="186"/>
    </location>
    <ligand>
        <name>S-adenosyl-L-methionine</name>
        <dbReference type="ChEBI" id="CHEBI:59789"/>
    </ligand>
</feature>
<keyword id="KW-0489">Methyltransferase</keyword>
<keyword id="KW-1185">Reference proteome</keyword>
<keyword id="KW-0698">rRNA processing</keyword>
<keyword id="KW-0949">S-adenosyl-L-methionine</keyword>
<keyword id="KW-0808">Transferase</keyword>
<name>YIKA_SCHPO</name>
<dbReference type="EC" id="2.1.1.-"/>
<dbReference type="EMBL" id="CU329670">
    <property type="protein sequence ID" value="CAD27503.1"/>
    <property type="molecule type" value="Genomic_DNA"/>
</dbReference>
<dbReference type="BioGRID" id="280511">
    <property type="interactions" value="1"/>
</dbReference>
<dbReference type="FunCoup" id="Q8TFH4">
    <property type="interactions" value="202"/>
</dbReference>
<dbReference type="STRING" id="284812.Q8TFH4"/>
<dbReference type="PaxDb" id="4896-SPAPB17E12.10c.1"/>
<dbReference type="EnsemblFungi" id="SPAPB17E12.10c.1">
    <property type="protein sequence ID" value="SPAPB17E12.10c.1:pep"/>
    <property type="gene ID" value="SPAPB17E12.10c"/>
</dbReference>
<dbReference type="KEGG" id="spo:3361435"/>
<dbReference type="PomBase" id="SPAPB17E12.10c"/>
<dbReference type="VEuPathDB" id="FungiDB:SPAPB17E12.10c"/>
<dbReference type="eggNOG" id="KOG4589">
    <property type="taxonomic scope" value="Eukaryota"/>
</dbReference>
<dbReference type="HOGENOM" id="CLU_921835_0_0_1"/>
<dbReference type="InParanoid" id="Q8TFH4"/>
<dbReference type="OMA" id="MVQGFEF"/>
<dbReference type="PhylomeDB" id="Q8TFH4"/>
<dbReference type="PRO" id="PR:Q8TFH4"/>
<dbReference type="Proteomes" id="UP000002485">
    <property type="component" value="Chromosome I"/>
</dbReference>
<dbReference type="GO" id="GO:0005739">
    <property type="term" value="C:mitochondrion"/>
    <property type="evidence" value="ECO:0000318"/>
    <property type="project" value="GO_Central"/>
</dbReference>
<dbReference type="GO" id="GO:0008650">
    <property type="term" value="F:rRNA (uridine-2'-O-)-methyltransferase activity"/>
    <property type="evidence" value="ECO:0000250"/>
    <property type="project" value="PomBase"/>
</dbReference>
<dbReference type="GO" id="GO:0000959">
    <property type="term" value="P:mitochondrial RNA metabolic process"/>
    <property type="evidence" value="ECO:0000305"/>
    <property type="project" value="PomBase"/>
</dbReference>
<dbReference type="GO" id="GO:0001510">
    <property type="term" value="P:RNA methylation"/>
    <property type="evidence" value="ECO:0000318"/>
    <property type="project" value="GO_Central"/>
</dbReference>
<dbReference type="CDD" id="cd02440">
    <property type="entry name" value="AdoMet_MTases"/>
    <property type="match status" value="1"/>
</dbReference>
<dbReference type="Gene3D" id="3.40.50.150">
    <property type="entry name" value="Vaccinia Virus protein VP39"/>
    <property type="match status" value="1"/>
</dbReference>
<dbReference type="InterPro" id="IPR050082">
    <property type="entry name" value="RNA_methyltr_RlmE"/>
</dbReference>
<dbReference type="InterPro" id="IPR002877">
    <property type="entry name" value="RNA_MeTrfase_FtsJ_dom"/>
</dbReference>
<dbReference type="InterPro" id="IPR029063">
    <property type="entry name" value="SAM-dependent_MTases_sf"/>
</dbReference>
<dbReference type="PANTHER" id="PTHR10920">
    <property type="entry name" value="RIBOSOMAL RNA METHYLTRANSFERASE"/>
    <property type="match status" value="1"/>
</dbReference>
<dbReference type="PANTHER" id="PTHR10920:SF29">
    <property type="entry name" value="RIBOSOMAL RNA METHYLTRANSFERASE PB17E12.10C-RELATED"/>
    <property type="match status" value="1"/>
</dbReference>
<dbReference type="Pfam" id="PF01728">
    <property type="entry name" value="FtsJ"/>
    <property type="match status" value="1"/>
</dbReference>
<dbReference type="SUPFAM" id="SSF53335">
    <property type="entry name" value="S-adenosyl-L-methionine-dependent methyltransferases"/>
    <property type="match status" value="1"/>
</dbReference>
<reference key="1">
    <citation type="journal article" date="2002" name="Nature">
        <title>The genome sequence of Schizosaccharomyces pombe.</title>
        <authorList>
            <person name="Wood V."/>
            <person name="Gwilliam R."/>
            <person name="Rajandream M.A."/>
            <person name="Lyne M.H."/>
            <person name="Lyne R."/>
            <person name="Stewart A."/>
            <person name="Sgouros J.G."/>
            <person name="Peat N."/>
            <person name="Hayles J."/>
            <person name="Baker S.G."/>
            <person name="Basham D."/>
            <person name="Bowman S."/>
            <person name="Brooks K."/>
            <person name="Brown D."/>
            <person name="Brown S."/>
            <person name="Chillingworth T."/>
            <person name="Churcher C.M."/>
            <person name="Collins M."/>
            <person name="Connor R."/>
            <person name="Cronin A."/>
            <person name="Davis P."/>
            <person name="Feltwell T."/>
            <person name="Fraser A."/>
            <person name="Gentles S."/>
            <person name="Goble A."/>
            <person name="Hamlin N."/>
            <person name="Harris D.E."/>
            <person name="Hidalgo J."/>
            <person name="Hodgson G."/>
            <person name="Holroyd S."/>
            <person name="Hornsby T."/>
            <person name="Howarth S."/>
            <person name="Huckle E.J."/>
            <person name="Hunt S."/>
            <person name="Jagels K."/>
            <person name="James K.D."/>
            <person name="Jones L."/>
            <person name="Jones M."/>
            <person name="Leather S."/>
            <person name="McDonald S."/>
            <person name="McLean J."/>
            <person name="Mooney P."/>
            <person name="Moule S."/>
            <person name="Mungall K.L."/>
            <person name="Murphy L.D."/>
            <person name="Niblett D."/>
            <person name="Odell C."/>
            <person name="Oliver K."/>
            <person name="O'Neil S."/>
            <person name="Pearson D."/>
            <person name="Quail M.A."/>
            <person name="Rabbinowitsch E."/>
            <person name="Rutherford K.M."/>
            <person name="Rutter S."/>
            <person name="Saunders D."/>
            <person name="Seeger K."/>
            <person name="Sharp S."/>
            <person name="Skelton J."/>
            <person name="Simmonds M.N."/>
            <person name="Squares R."/>
            <person name="Squares S."/>
            <person name="Stevens K."/>
            <person name="Taylor K."/>
            <person name="Taylor R.G."/>
            <person name="Tivey A."/>
            <person name="Walsh S.V."/>
            <person name="Warren T."/>
            <person name="Whitehead S."/>
            <person name="Woodward J.R."/>
            <person name="Volckaert G."/>
            <person name="Aert R."/>
            <person name="Robben J."/>
            <person name="Grymonprez B."/>
            <person name="Weltjens I."/>
            <person name="Vanstreels E."/>
            <person name="Rieger M."/>
            <person name="Schaefer M."/>
            <person name="Mueller-Auer S."/>
            <person name="Gabel C."/>
            <person name="Fuchs M."/>
            <person name="Duesterhoeft A."/>
            <person name="Fritzc C."/>
            <person name="Holzer E."/>
            <person name="Moestl D."/>
            <person name="Hilbert H."/>
            <person name="Borzym K."/>
            <person name="Langer I."/>
            <person name="Beck A."/>
            <person name="Lehrach H."/>
            <person name="Reinhardt R."/>
            <person name="Pohl T.M."/>
            <person name="Eger P."/>
            <person name="Zimmermann W."/>
            <person name="Wedler H."/>
            <person name="Wambutt R."/>
            <person name="Purnelle B."/>
            <person name="Goffeau A."/>
            <person name="Cadieu E."/>
            <person name="Dreano S."/>
            <person name="Gloux S."/>
            <person name="Lelaure V."/>
            <person name="Mottier S."/>
            <person name="Galibert F."/>
            <person name="Aves S.J."/>
            <person name="Xiang Z."/>
            <person name="Hunt C."/>
            <person name="Moore K."/>
            <person name="Hurst S.M."/>
            <person name="Lucas M."/>
            <person name="Rochet M."/>
            <person name="Gaillardin C."/>
            <person name="Tallada V.A."/>
            <person name="Garzon A."/>
            <person name="Thode G."/>
            <person name="Daga R.R."/>
            <person name="Cruzado L."/>
            <person name="Jimenez J."/>
            <person name="Sanchez M."/>
            <person name="del Rey F."/>
            <person name="Benito J."/>
            <person name="Dominguez A."/>
            <person name="Revuelta J.L."/>
            <person name="Moreno S."/>
            <person name="Armstrong J."/>
            <person name="Forsburg S.L."/>
            <person name="Cerutti L."/>
            <person name="Lowe T."/>
            <person name="McCombie W.R."/>
            <person name="Paulsen I."/>
            <person name="Potashkin J."/>
            <person name="Shpakovski G.V."/>
            <person name="Ussery D."/>
            <person name="Barrell B.G."/>
            <person name="Nurse P."/>
        </authorList>
    </citation>
    <scope>NUCLEOTIDE SEQUENCE [LARGE SCALE GENOMIC DNA]</scope>
    <source>
        <strain>972 / ATCC 24843</strain>
    </source>
</reference>
<protein>
    <recommendedName>
        <fullName>Putative ribosomal RNA methyltransferase PB17E12.10c</fullName>
        <ecNumber>2.1.1.-</ecNumber>
    </recommendedName>
    <alternativeName>
        <fullName>rRNA (uridine-2'-O-)-methyltransferase</fullName>
    </alternativeName>
</protein>
<evidence type="ECO:0000250" key="1"/>
<evidence type="ECO:0000305" key="2"/>
<accession>Q8TFH4</accession>
<organism>
    <name type="scientific">Schizosaccharomyces pombe (strain 972 / ATCC 24843)</name>
    <name type="common">Fission yeast</name>
    <dbReference type="NCBI Taxonomy" id="284812"/>
    <lineage>
        <taxon>Eukaryota</taxon>
        <taxon>Fungi</taxon>
        <taxon>Dikarya</taxon>
        <taxon>Ascomycota</taxon>
        <taxon>Taphrinomycotina</taxon>
        <taxon>Schizosaccharomycetes</taxon>
        <taxon>Schizosaccharomycetales</taxon>
        <taxon>Schizosaccharomycetaceae</taxon>
        <taxon>Schizosaccharomyces</taxon>
    </lineage>
</organism>
<proteinExistence type="inferred from homology"/>
<gene>
    <name type="ORF">SPAPB17E12.10c</name>
</gene>
<comment type="catalytic activity">
    <reaction>
        <text>a uridine in rRNA + S-adenosyl-L-methionine = a 2'-O-methyluridine in rRNA + S-adenosyl-L-homocysteine + H(+)</text>
        <dbReference type="Rhea" id="RHEA:54152"/>
        <dbReference type="Rhea" id="RHEA-COMP:13812"/>
        <dbReference type="Rhea" id="RHEA-COMP:13814"/>
        <dbReference type="ChEBI" id="CHEBI:15378"/>
        <dbReference type="ChEBI" id="CHEBI:57856"/>
        <dbReference type="ChEBI" id="CHEBI:59789"/>
        <dbReference type="ChEBI" id="CHEBI:65315"/>
        <dbReference type="ChEBI" id="CHEBI:74478"/>
    </reaction>
</comment>
<comment type="similarity">
    <text evidence="2">Belongs to the class I-like SAM-binding methyltransferase superfamily. RNA methyltransferase RlmE family.</text>
</comment>
<sequence length="301" mass="34069">MSMRIWSRSSSAYSAIARSSSWFNNSLFSSCLLRFYSNPPKKTKKNTLISLRKSAETANEKFIEKINKEHQLFKPGQIVVDLGCAPGIWSTIAARHVGLFGRVIACDIIPCRLPENSSMIQGNILSMEIQLEIAKAAIRSRNSFFRNQQDHNSASIPYLQSVFEEERDTKEKAKIEDLSADVIMSDLGPPFPMVQGFEFWISKLPYLAMQTNEHLAVKDELDSLYLAQAALLFAIKALKPDGIFLCKVLESSHLRSFAEDLSMCFKCVKKIQFKTKIKDELYAVYFCSGKQLSCHSKLLNI</sequence>